<evidence type="ECO:0000250" key="1"/>
<evidence type="ECO:0000305" key="2"/>
<accession>Q9SNW5</accession>
<protein>
    <recommendedName>
        <fullName>Profilin-3</fullName>
    </recommendedName>
</protein>
<name>PROF3_LILLO</name>
<comment type="function">
    <text evidence="1">Binds to actin and affects the structure of the cytoskeleton. At high concentrations, profilin prevents the polymerization of actin, whereas it enhances it at low concentrations. By binding to PIP2, it inhibits the formation of IP3 and DG (By similarity).</text>
</comment>
<comment type="subunit">
    <text>Occurs in many kinds of cells as a complex with monomeric actin in a 1:1 ratio.</text>
</comment>
<comment type="subcellular location">
    <subcellularLocation>
        <location evidence="1">Cytoplasm</location>
        <location evidence="1">Cytoskeleton</location>
    </subcellularLocation>
</comment>
<comment type="similarity">
    <text evidence="2">Belongs to the profilin family.</text>
</comment>
<keyword id="KW-0009">Actin-binding</keyword>
<keyword id="KW-0963">Cytoplasm</keyword>
<keyword id="KW-0206">Cytoskeleton</keyword>
<feature type="initiator methionine" description="Removed" evidence="1">
    <location>
        <position position="1"/>
    </location>
</feature>
<feature type="chain" id="PRO_0000199642" description="Profilin-3">
    <location>
        <begin position="2"/>
        <end position="131"/>
    </location>
</feature>
<proteinExistence type="evidence at transcript level"/>
<organism>
    <name type="scientific">Lilium longiflorum</name>
    <name type="common">Trumpet lily</name>
    <dbReference type="NCBI Taxonomy" id="4690"/>
    <lineage>
        <taxon>Eukaryota</taxon>
        <taxon>Viridiplantae</taxon>
        <taxon>Streptophyta</taxon>
        <taxon>Embryophyta</taxon>
        <taxon>Tracheophyta</taxon>
        <taxon>Spermatophyta</taxon>
        <taxon>Magnoliopsida</taxon>
        <taxon>Liliopsida</taxon>
        <taxon>Liliales</taxon>
        <taxon>Liliaceae</taxon>
        <taxon>Lilium</taxon>
    </lineage>
</organism>
<sequence>MSWQTYVDEHLMCEIDGQHLTAAAIIGHEGGIWAQSDSFPQVKPEQTAAIMRDFAEPGSLAPTGLFLGDGKYMVIQGEPGAVIRGKKGSGGVTIKKTNMALIVGIYDEPMTPGQCNMVVERLGDYLYDQGF</sequence>
<dbReference type="EMBL" id="AF200186">
    <property type="protein sequence ID" value="AAF08304.1"/>
    <property type="molecule type" value="mRNA"/>
</dbReference>
<dbReference type="SMR" id="Q9SNW5"/>
<dbReference type="GO" id="GO:0005938">
    <property type="term" value="C:cell cortex"/>
    <property type="evidence" value="ECO:0007669"/>
    <property type="project" value="TreeGrafter"/>
</dbReference>
<dbReference type="GO" id="GO:0005856">
    <property type="term" value="C:cytoskeleton"/>
    <property type="evidence" value="ECO:0007669"/>
    <property type="project" value="UniProtKB-SubCell"/>
</dbReference>
<dbReference type="GO" id="GO:0003785">
    <property type="term" value="F:actin monomer binding"/>
    <property type="evidence" value="ECO:0007669"/>
    <property type="project" value="TreeGrafter"/>
</dbReference>
<dbReference type="CDD" id="cd00148">
    <property type="entry name" value="PROF"/>
    <property type="match status" value="1"/>
</dbReference>
<dbReference type="FunFam" id="3.30.450.30:FF:000001">
    <property type="entry name" value="Profilin"/>
    <property type="match status" value="1"/>
</dbReference>
<dbReference type="Gene3D" id="3.30.450.30">
    <property type="entry name" value="Dynein light chain 2a, cytoplasmic"/>
    <property type="match status" value="1"/>
</dbReference>
<dbReference type="InterPro" id="IPR048278">
    <property type="entry name" value="PFN"/>
</dbReference>
<dbReference type="InterPro" id="IPR005455">
    <property type="entry name" value="PFN_euk"/>
</dbReference>
<dbReference type="InterPro" id="IPR036140">
    <property type="entry name" value="PFN_sf"/>
</dbReference>
<dbReference type="InterPro" id="IPR027310">
    <property type="entry name" value="Profilin_CS"/>
</dbReference>
<dbReference type="PANTHER" id="PTHR11604">
    <property type="entry name" value="PROFILIN"/>
    <property type="match status" value="1"/>
</dbReference>
<dbReference type="PANTHER" id="PTHR11604:SF49">
    <property type="entry name" value="PROFILIN-2"/>
    <property type="match status" value="1"/>
</dbReference>
<dbReference type="Pfam" id="PF00235">
    <property type="entry name" value="Profilin"/>
    <property type="match status" value="1"/>
</dbReference>
<dbReference type="PRINTS" id="PR00392">
    <property type="entry name" value="PROFILIN"/>
</dbReference>
<dbReference type="PRINTS" id="PR01640">
    <property type="entry name" value="PROFILINPLNT"/>
</dbReference>
<dbReference type="SMART" id="SM00392">
    <property type="entry name" value="PROF"/>
    <property type="match status" value="1"/>
</dbReference>
<dbReference type="SUPFAM" id="SSF55770">
    <property type="entry name" value="Profilin (actin-binding protein)"/>
    <property type="match status" value="1"/>
</dbReference>
<dbReference type="PROSITE" id="PS00414">
    <property type="entry name" value="PROFILIN"/>
    <property type="match status" value="1"/>
</dbReference>
<reference key="1">
    <citation type="submission" date="1999-10" db="EMBL/GenBank/DDBJ databases">
        <title>cDNA cloning of three profilins from Lilium longiflorum pollen.</title>
        <authorList>
            <person name="Vidali L."/>
            <person name="Cheung A.Y."/>
            <person name="Hepler P.K."/>
        </authorList>
    </citation>
    <scope>NUCLEOTIDE SEQUENCE [MRNA]</scope>
    <source>
        <tissue>Pollen</tissue>
    </source>
</reference>